<feature type="chain" id="PRO_0000058022" description="CST complex subunit STN1">
    <location>
        <begin position="1"/>
        <end position="408"/>
    </location>
</feature>
<feature type="DNA-binding region" description="OB">
    <location>
        <begin position="64"/>
        <end position="165"/>
    </location>
</feature>
<feature type="region of interest" description="Interaction with CTC1" evidence="2">
    <location>
        <begin position="8"/>
        <end position="195"/>
    </location>
</feature>
<feature type="region of interest" description="Winged helix-turn-helix (wHTH) 1" evidence="1">
    <location>
        <begin position="201"/>
        <end position="304"/>
    </location>
</feature>
<feature type="region of interest" description="Winged helix-turn-helix (wHTH) 1" evidence="1">
    <location>
        <begin position="305"/>
        <end position="408"/>
    </location>
</feature>
<organism>
    <name type="scientific">Rattus norvegicus</name>
    <name type="common">Rat</name>
    <dbReference type="NCBI Taxonomy" id="10116"/>
    <lineage>
        <taxon>Eukaryota</taxon>
        <taxon>Metazoa</taxon>
        <taxon>Chordata</taxon>
        <taxon>Craniata</taxon>
        <taxon>Vertebrata</taxon>
        <taxon>Euteleostomi</taxon>
        <taxon>Mammalia</taxon>
        <taxon>Eutheria</taxon>
        <taxon>Euarchontoglires</taxon>
        <taxon>Glires</taxon>
        <taxon>Rodentia</taxon>
        <taxon>Myomorpha</taxon>
        <taxon>Muroidea</taxon>
        <taxon>Muridae</taxon>
        <taxon>Murinae</taxon>
        <taxon>Rattus</taxon>
    </lineage>
</organism>
<gene>
    <name evidence="2" type="primary">Stn1</name>
    <name type="synonym">Obfc1</name>
</gene>
<evidence type="ECO:0000250" key="1"/>
<evidence type="ECO:0000250" key="2">
    <source>
        <dbReference type="UniProtKB" id="Q9H668"/>
    </source>
</evidence>
<evidence type="ECO:0000305" key="3"/>
<protein>
    <recommendedName>
        <fullName evidence="2">CST complex subunit STN1</fullName>
    </recommendedName>
    <alternativeName>
        <fullName>Oligonucleotide/oligosaccharide-binding fold-containing protein 1</fullName>
    </alternativeName>
    <alternativeName>
        <fullName>Suppressor of cdc thirteen homolog</fullName>
    </alternativeName>
</protein>
<comment type="function">
    <text evidence="2">Component of the CST complex proposed to act as a specialized replication factor promoting DNA replication under conditions of replication stress or natural replication barriers such as the telomere duplex. The CST complex binds single-stranded DNA with high affinity in a sequence-independent manner, while isolated subunits bind DNA with low affinity by themselves. Initially the CST complex has been proposed to protect telomeres from DNA degradation. However, the CST complex has been shown to be involved in several aspects of telomere replication. The CST complex inhibits telomerase and is involved in telomere length homeostasis; it is proposed to bind to newly telomerase-synthesized 3' overhangs and to terminate telomerase action implicating the association with the ACD:POT1 complex thus interfering with its telomerase stimulation activity. The CST complex is also proposed to be involved in fill-in synthesis of the telomeric C-strand probably implicating recruitment and activation of DNA polymerase alpha. The CST complex facilitates recovery from many forms of exogenous DNA damage; seems to be involved in the re-initiation of DNA replication at repaired forks and/or dormant origins. Required for efficicient replication of the duplex region of the telomere. Promotes efficient replication of lagging-strand telomeres. Promotes general replication start following replication-fork stalling implicating new origin firing. May be in involved in C-strand fill-in during late S/G2 phase independent of its role in telomere duplex replication (By similarity).</text>
</comment>
<comment type="subunit">
    <text evidence="2">Component of the CST complex, composed of TEN1/C17orf106, CTC1/C17orf68 and STN1; in the complex interacts directly with TEN1 and CTC1. Interacts with ACD/TPP1, POT1 and POLA1.</text>
</comment>
<comment type="subcellular location">
    <subcellularLocation>
        <location evidence="2">Nucleus</location>
    </subcellularLocation>
    <subcellularLocation>
        <location evidence="2">Chromosome</location>
        <location evidence="2">Telomere</location>
    </subcellularLocation>
</comment>
<comment type="similarity">
    <text evidence="3">Belongs to the STN1 family.</text>
</comment>
<proteinExistence type="evidence at transcript level"/>
<reference key="1">
    <citation type="journal article" date="2004" name="Genome Res.">
        <title>The status, quality, and expansion of the NIH full-length cDNA project: the Mammalian Gene Collection (MGC).</title>
        <authorList>
            <consortium name="The MGC Project Team"/>
        </authorList>
    </citation>
    <scope>NUCLEOTIDE SEQUENCE [LARGE SCALE MRNA]</scope>
    <source>
        <tissue>Lung</tissue>
    </source>
</reference>
<dbReference type="EMBL" id="BC079096">
    <property type="protein sequence ID" value="AAH79096.1"/>
    <property type="molecule type" value="mRNA"/>
</dbReference>
<dbReference type="RefSeq" id="NP_001011943.1">
    <property type="nucleotide sequence ID" value="NM_001011943.1"/>
</dbReference>
<dbReference type="SMR" id="Q6AYD2"/>
<dbReference type="BioGRID" id="254548">
    <property type="interactions" value="1"/>
</dbReference>
<dbReference type="FunCoup" id="Q6AYD2">
    <property type="interactions" value="669"/>
</dbReference>
<dbReference type="STRING" id="10116.ENSRNOP00000027614"/>
<dbReference type="PhosphoSitePlus" id="Q6AYD2"/>
<dbReference type="PaxDb" id="10116-ENSRNOP00000027614"/>
<dbReference type="GeneID" id="294025"/>
<dbReference type="KEGG" id="rno:294025"/>
<dbReference type="UCSC" id="RGD:1305637">
    <property type="organism name" value="rat"/>
</dbReference>
<dbReference type="AGR" id="RGD:1305637"/>
<dbReference type="CTD" id="79991"/>
<dbReference type="RGD" id="1305637">
    <property type="gene designation" value="Stn1"/>
</dbReference>
<dbReference type="eggNOG" id="KOG3108">
    <property type="taxonomic scope" value="Eukaryota"/>
</dbReference>
<dbReference type="HOGENOM" id="CLU_063889_0_0_1"/>
<dbReference type="InParanoid" id="Q6AYD2"/>
<dbReference type="OrthoDB" id="84776at9989"/>
<dbReference type="PhylomeDB" id="Q6AYD2"/>
<dbReference type="TreeFam" id="TF328623"/>
<dbReference type="Reactome" id="R-RNO-174411">
    <property type="pathway name" value="Polymerase switching on the C-strand of the telomere"/>
</dbReference>
<dbReference type="Reactome" id="R-RNO-174430">
    <property type="pathway name" value="Telomere C-strand synthesis initiation"/>
</dbReference>
<dbReference type="PRO" id="PR:Q6AYD2"/>
<dbReference type="Proteomes" id="UP000002494">
    <property type="component" value="Unplaced"/>
</dbReference>
<dbReference type="GO" id="GO:0000781">
    <property type="term" value="C:chromosome, telomeric region"/>
    <property type="evidence" value="ECO:0000250"/>
    <property type="project" value="UniProtKB"/>
</dbReference>
<dbReference type="GO" id="GO:1990879">
    <property type="term" value="C:CST complex"/>
    <property type="evidence" value="ECO:0000266"/>
    <property type="project" value="RGD"/>
</dbReference>
<dbReference type="GO" id="GO:0005634">
    <property type="term" value="C:nucleus"/>
    <property type="evidence" value="ECO:0000250"/>
    <property type="project" value="UniProtKB"/>
</dbReference>
<dbReference type="GO" id="GO:0003697">
    <property type="term" value="F:single-stranded DNA binding"/>
    <property type="evidence" value="ECO:0000250"/>
    <property type="project" value="UniProtKB"/>
</dbReference>
<dbReference type="GO" id="GO:0043047">
    <property type="term" value="F:single-stranded telomeric DNA binding"/>
    <property type="evidence" value="ECO:0000250"/>
    <property type="project" value="UniProtKB"/>
</dbReference>
<dbReference type="GO" id="GO:0042162">
    <property type="term" value="F:telomeric DNA binding"/>
    <property type="evidence" value="ECO:0000266"/>
    <property type="project" value="RGD"/>
</dbReference>
<dbReference type="GO" id="GO:0032211">
    <property type="term" value="P:negative regulation of telomere maintenance via telomerase"/>
    <property type="evidence" value="ECO:0000266"/>
    <property type="project" value="RGD"/>
</dbReference>
<dbReference type="GO" id="GO:0045740">
    <property type="term" value="P:positive regulation of DNA replication"/>
    <property type="evidence" value="ECO:0000250"/>
    <property type="project" value="UniProtKB"/>
</dbReference>
<dbReference type="GO" id="GO:0016233">
    <property type="term" value="P:telomere capping"/>
    <property type="evidence" value="ECO:0007669"/>
    <property type="project" value="InterPro"/>
</dbReference>
<dbReference type="GO" id="GO:0000723">
    <property type="term" value="P:telomere maintenance"/>
    <property type="evidence" value="ECO:0000250"/>
    <property type="project" value="UniProtKB"/>
</dbReference>
<dbReference type="GO" id="GO:0010833">
    <property type="term" value="P:telomere maintenance via telomere lengthening"/>
    <property type="evidence" value="ECO:0000250"/>
    <property type="project" value="UniProtKB"/>
</dbReference>
<dbReference type="CDD" id="cd04483">
    <property type="entry name" value="hOBFC1_like"/>
    <property type="match status" value="1"/>
</dbReference>
<dbReference type="FunFam" id="1.10.10.980:FF:000001">
    <property type="entry name" value="CST complex subunit STN1"/>
    <property type="match status" value="1"/>
</dbReference>
<dbReference type="FunFam" id="2.40.50.140:FF:000181">
    <property type="entry name" value="CST complex subunit STN1"/>
    <property type="match status" value="1"/>
</dbReference>
<dbReference type="Gene3D" id="1.10.10.980">
    <property type="entry name" value="CST, Suppressor of Cdc13 homolog, complex subunit STN1, N-terminal domain"/>
    <property type="match status" value="1"/>
</dbReference>
<dbReference type="Gene3D" id="2.40.50.140">
    <property type="entry name" value="Nucleic acid-binding proteins"/>
    <property type="match status" value="1"/>
</dbReference>
<dbReference type="Gene3D" id="1.10.10.10">
    <property type="entry name" value="Winged helix-like DNA-binding domain superfamily/Winged helix DNA-binding domain"/>
    <property type="match status" value="1"/>
</dbReference>
<dbReference type="InterPro" id="IPR015253">
    <property type="entry name" value="CST_STN1_C"/>
</dbReference>
<dbReference type="InterPro" id="IPR042082">
    <property type="entry name" value="CST_Stn1_wHTH1_sf"/>
</dbReference>
<dbReference type="InterPro" id="IPR012340">
    <property type="entry name" value="NA-bd_OB-fold"/>
</dbReference>
<dbReference type="InterPro" id="IPR040260">
    <property type="entry name" value="RFA2-like"/>
</dbReference>
<dbReference type="InterPro" id="IPR014647">
    <property type="entry name" value="Stn1"/>
</dbReference>
<dbReference type="InterPro" id="IPR018856">
    <property type="entry name" value="Stn1_N"/>
</dbReference>
<dbReference type="InterPro" id="IPR036388">
    <property type="entry name" value="WH-like_DNA-bd_sf"/>
</dbReference>
<dbReference type="InterPro" id="IPR036390">
    <property type="entry name" value="WH_DNA-bd_sf"/>
</dbReference>
<dbReference type="PANTHER" id="PTHR13989:SF33">
    <property type="entry name" value="CST COMPLEX SUBUNIT STN1"/>
    <property type="match status" value="1"/>
</dbReference>
<dbReference type="PANTHER" id="PTHR13989">
    <property type="entry name" value="REPLICATION PROTEIN A-RELATED"/>
    <property type="match status" value="1"/>
</dbReference>
<dbReference type="Pfam" id="PF10451">
    <property type="entry name" value="Stn1"/>
    <property type="match status" value="1"/>
</dbReference>
<dbReference type="Pfam" id="PF09170">
    <property type="entry name" value="STN1_2"/>
    <property type="match status" value="2"/>
</dbReference>
<dbReference type="PIRSF" id="PIRSF036950">
    <property type="entry name" value="UCP036950"/>
    <property type="match status" value="1"/>
</dbReference>
<dbReference type="SUPFAM" id="SSF50249">
    <property type="entry name" value="Nucleic acid-binding proteins"/>
    <property type="match status" value="1"/>
</dbReference>
<dbReference type="SUPFAM" id="SSF46785">
    <property type="entry name" value="Winged helix' DNA-binding domain"/>
    <property type="match status" value="1"/>
</dbReference>
<name>STN1_RAT</name>
<keyword id="KW-0158">Chromosome</keyword>
<keyword id="KW-0238">DNA-binding</keyword>
<keyword id="KW-0539">Nucleus</keyword>
<keyword id="KW-1185">Reference proteome</keyword>
<keyword id="KW-0779">Telomere</keyword>
<sequence length="408" mass="46783">MPEPCLLMQCESSPKEEEIPSLFWGLDPVFLAFAKLYIKDILEMKESQQVPGMYFYNGHPIRRVDIMGAVISVKERETFYSYGVDDATGVINCVCWKRPSNAESSSDPAILSTSRELSMTSQLKKLQETIEQKTKIGIGDIIRVRGYVRMFREEREICATIYYKVDDPVWNMQIARMLELPELYKKVYDQPFRNPALKEEEALNSKDTLDLAGLTALLSEKVKEFLQEKKVQSFYQKELEMVEPLQSLASQPVTHSTCSDQVELKNDAASDIHSVFKNALHLLQEKGFVFQRDGGSDKLYYVTSKDKDLHQKIYQIIKEDCQKPNLWCMLPQEAWRGTEEGLAVVVTLSVCLPLPVDVEKGCHLMHVLNCVLLNLRWDLNKAVLQQVLELLEDQSDIVSTGDHYYTAF</sequence>
<accession>Q6AYD2</accession>